<keyword id="KW-0072">Autophagy</keyword>
<keyword id="KW-1017">Isopeptide bond</keyword>
<keyword id="KW-0472">Membrane</keyword>
<keyword id="KW-0653">Protein transport</keyword>
<keyword id="KW-1185">Reference proteome</keyword>
<keyword id="KW-0813">Transport</keyword>
<keyword id="KW-0832">Ubl conjugation</keyword>
<protein>
    <recommendedName>
        <fullName>Autophagy protein 5</fullName>
    </recommendedName>
</protein>
<gene>
    <name type="primary">ATG5</name>
    <name type="ORF">Kpol_1012p12</name>
</gene>
<sequence length="297" mass="34956">MDELRKLVWDGKINVQIAVNPQLLVKGINEKDVTVNLRIPRNAYLMNYIDEILNDLRKFLITDINFEELDGMFWFAYEGIPLYWNYPFGALYDSMVGIDPSIRYDQMKQCNSMMNIWKLQLNYSKEYPSGMIPIVDRVNQIQKYWMHQWKQACFVLNGTSKQVMSLSLVHSQQFWKSILMRDYITFYKIALKIIPSKPRHIPLMIHLTFPEIQIIQPICKFEDDSGNPQTLKDMLMTELPDIFSVDETPIAKVVSHGIEIPFDMPLFALYERFLSCDAFLHLSICMVTDDEMKRNKV</sequence>
<comment type="function">
    <text evidence="1">Involved in cytoplasm to vacuole transport (Cvt) and autophagic vesicle formation. Autophagy is essential for maintenance of amino acid levels and protein synthesis under nitrogen starvation. Required for selective autophagic degradation of the nucleus (nucleophagy). Also required for mitophagy, which eliminates defective or superfluous mitochondria in order to fulfill cellular energy requirements and prevent excess ROS production. Conjugation with ATG12, through a ubiquitin-like conjugating system involving ATG7 as an E1-like activating enzyme and ATG10 as an E2-like conjugating enzyme, is essential for its function. The ATG12-ATG5 conjugate acts as an E3-like enzyme which is required for lipidation of ATG8 and ATG8 association to the vesicle membranes (By similarity).</text>
</comment>
<comment type="subunit">
    <text evidence="1">Conjugated with ATG12.</text>
</comment>
<comment type="subcellular location">
    <subcellularLocation>
        <location evidence="1">Preautophagosomal structure membrane</location>
        <topology evidence="1">Peripheral membrane protein</topology>
    </subcellularLocation>
</comment>
<comment type="PTM">
    <text evidence="1">Conjugated to ATG12; which is essential for autophagy.</text>
</comment>
<comment type="similarity">
    <text evidence="2">Belongs to the ATG5 family.</text>
</comment>
<accession>A7TS83</accession>
<dbReference type="EMBL" id="DS480501">
    <property type="protein sequence ID" value="EDO14882.1"/>
    <property type="molecule type" value="Genomic_DNA"/>
</dbReference>
<dbReference type="RefSeq" id="XP_001642740.1">
    <property type="nucleotide sequence ID" value="XM_001642690.1"/>
</dbReference>
<dbReference type="SMR" id="A7TS83"/>
<dbReference type="FunCoup" id="A7TS83">
    <property type="interactions" value="366"/>
</dbReference>
<dbReference type="STRING" id="436907.A7TS83"/>
<dbReference type="GeneID" id="5542909"/>
<dbReference type="KEGG" id="vpo:Kpol_1012p12"/>
<dbReference type="eggNOG" id="KOG2976">
    <property type="taxonomic scope" value="Eukaryota"/>
</dbReference>
<dbReference type="HOGENOM" id="CLU_051894_2_0_1"/>
<dbReference type="InParanoid" id="A7TS83"/>
<dbReference type="OMA" id="SIQKAVW"/>
<dbReference type="OrthoDB" id="272162at2759"/>
<dbReference type="PhylomeDB" id="A7TS83"/>
<dbReference type="Proteomes" id="UP000000267">
    <property type="component" value="Unassembled WGS sequence"/>
</dbReference>
<dbReference type="GO" id="GO:0034274">
    <property type="term" value="C:Atg12-Atg5-Atg16 complex"/>
    <property type="evidence" value="ECO:0007669"/>
    <property type="project" value="EnsemblFungi"/>
</dbReference>
<dbReference type="GO" id="GO:0005776">
    <property type="term" value="C:autophagosome"/>
    <property type="evidence" value="ECO:0007669"/>
    <property type="project" value="EnsemblFungi"/>
</dbReference>
<dbReference type="GO" id="GO:0005829">
    <property type="term" value="C:cytosol"/>
    <property type="evidence" value="ECO:0007669"/>
    <property type="project" value="EnsemblFungi"/>
</dbReference>
<dbReference type="GO" id="GO:0044233">
    <property type="term" value="C:mitochondria-associated endoplasmic reticulum membrane contact site"/>
    <property type="evidence" value="ECO:0007669"/>
    <property type="project" value="TreeGrafter"/>
</dbReference>
<dbReference type="GO" id="GO:0061908">
    <property type="term" value="C:phagophore"/>
    <property type="evidence" value="ECO:0007669"/>
    <property type="project" value="EnsemblFungi"/>
</dbReference>
<dbReference type="GO" id="GO:0034045">
    <property type="term" value="C:phagophore assembly site membrane"/>
    <property type="evidence" value="ECO:0007669"/>
    <property type="project" value="UniProtKB-SubCell"/>
</dbReference>
<dbReference type="GO" id="GO:0120095">
    <property type="term" value="C:vacuole-isolation membrane contact site"/>
    <property type="evidence" value="ECO:0007669"/>
    <property type="project" value="EnsemblFungi"/>
</dbReference>
<dbReference type="GO" id="GO:0019776">
    <property type="term" value="F:Atg8-family ligase activity"/>
    <property type="evidence" value="ECO:0007669"/>
    <property type="project" value="EnsemblFungi"/>
</dbReference>
<dbReference type="GO" id="GO:0140355">
    <property type="term" value="F:cargo receptor ligand activity"/>
    <property type="evidence" value="ECO:0007669"/>
    <property type="project" value="EnsemblFungi"/>
</dbReference>
<dbReference type="GO" id="GO:0008047">
    <property type="term" value="F:enzyme activator activity"/>
    <property type="evidence" value="ECO:0007669"/>
    <property type="project" value="EnsemblFungi"/>
</dbReference>
<dbReference type="GO" id="GO:0006995">
    <property type="term" value="P:cellular response to nitrogen starvation"/>
    <property type="evidence" value="ECO:0007669"/>
    <property type="project" value="TreeGrafter"/>
</dbReference>
<dbReference type="GO" id="GO:0051365">
    <property type="term" value="P:cellular response to potassium ion starvation"/>
    <property type="evidence" value="ECO:0007669"/>
    <property type="project" value="EnsemblFungi"/>
</dbReference>
<dbReference type="GO" id="GO:0032258">
    <property type="term" value="P:cytoplasm to vacuole targeting by the Cvt pathway"/>
    <property type="evidence" value="ECO:0007669"/>
    <property type="project" value="EnsemblFungi"/>
</dbReference>
<dbReference type="GO" id="GO:0000423">
    <property type="term" value="P:mitophagy"/>
    <property type="evidence" value="ECO:0007669"/>
    <property type="project" value="EnsemblFungi"/>
</dbReference>
<dbReference type="GO" id="GO:0034727">
    <property type="term" value="P:piecemeal microautophagy of the nucleus"/>
    <property type="evidence" value="ECO:0007669"/>
    <property type="project" value="EnsemblFungi"/>
</dbReference>
<dbReference type="Gene3D" id="3.10.20.620">
    <property type="match status" value="1"/>
</dbReference>
<dbReference type="Gene3D" id="1.10.246.190">
    <property type="entry name" value="Autophagy protein Apg5, helix rich domain"/>
    <property type="match status" value="1"/>
</dbReference>
<dbReference type="Gene3D" id="3.10.20.90">
    <property type="entry name" value="Phosphatidylinositol 3-kinase Catalytic Subunit, Chain A, domain 1"/>
    <property type="match status" value="1"/>
</dbReference>
<dbReference type="InterPro" id="IPR007239">
    <property type="entry name" value="Atg5"/>
</dbReference>
<dbReference type="InterPro" id="IPR048940">
    <property type="entry name" value="ATG5_HBR"/>
</dbReference>
<dbReference type="InterPro" id="IPR042526">
    <property type="entry name" value="Atg5_HR"/>
</dbReference>
<dbReference type="InterPro" id="IPR048939">
    <property type="entry name" value="ATG5_UblA"/>
</dbReference>
<dbReference type="InterPro" id="IPR042527">
    <property type="entry name" value="Atg5_UblA_dom_sf"/>
</dbReference>
<dbReference type="InterPro" id="IPR048318">
    <property type="entry name" value="ATG5_UblB"/>
</dbReference>
<dbReference type="PANTHER" id="PTHR13040">
    <property type="entry name" value="AUTOPHAGY PROTEIN 5"/>
    <property type="match status" value="1"/>
</dbReference>
<dbReference type="PANTHER" id="PTHR13040:SF2">
    <property type="entry name" value="AUTOPHAGY PROTEIN 5"/>
    <property type="match status" value="1"/>
</dbReference>
<dbReference type="Pfam" id="PF20637">
    <property type="entry name" value="ATG5_HBR"/>
    <property type="match status" value="1"/>
</dbReference>
<dbReference type="Pfam" id="PF20638">
    <property type="entry name" value="ATG5_UblA"/>
    <property type="match status" value="1"/>
</dbReference>
<dbReference type="Pfam" id="PF04106">
    <property type="entry name" value="ATG5_UblB"/>
    <property type="match status" value="1"/>
</dbReference>
<name>ATG5_VANPO</name>
<organism>
    <name type="scientific">Vanderwaltozyma polyspora (strain ATCC 22028 / DSM 70294 / BCRC 21397 / CBS 2163 / NBRC 10782 / NRRL Y-8283 / UCD 57-17)</name>
    <name type="common">Kluyveromyces polysporus</name>
    <dbReference type="NCBI Taxonomy" id="436907"/>
    <lineage>
        <taxon>Eukaryota</taxon>
        <taxon>Fungi</taxon>
        <taxon>Dikarya</taxon>
        <taxon>Ascomycota</taxon>
        <taxon>Saccharomycotina</taxon>
        <taxon>Saccharomycetes</taxon>
        <taxon>Saccharomycetales</taxon>
        <taxon>Saccharomycetaceae</taxon>
        <taxon>Vanderwaltozyma</taxon>
    </lineage>
</organism>
<reference key="1">
    <citation type="journal article" date="2007" name="Proc. Natl. Acad. Sci. U.S.A.">
        <title>Independent sorting-out of thousands of duplicated gene pairs in two yeast species descended from a whole-genome duplication.</title>
        <authorList>
            <person name="Scannell D.R."/>
            <person name="Frank A.C."/>
            <person name="Conant G.C."/>
            <person name="Byrne K.P."/>
            <person name="Woolfit M."/>
            <person name="Wolfe K.H."/>
        </authorList>
    </citation>
    <scope>NUCLEOTIDE SEQUENCE [LARGE SCALE GENOMIC DNA]</scope>
    <source>
        <strain>ATCC 22028 / DSM 70294 / BCRC 21397 / CBS 2163 / NBRC 10782 / NRRL Y-8283 / UCD 57-17</strain>
    </source>
</reference>
<proteinExistence type="inferred from homology"/>
<evidence type="ECO:0000250" key="1"/>
<evidence type="ECO:0000305" key="2"/>
<feature type="chain" id="PRO_0000317863" description="Autophagy protein 5">
    <location>
        <begin position="1"/>
        <end position="297"/>
    </location>
</feature>
<feature type="cross-link" description="Glycyl lysine isopeptide (Lys-Gly) (interchain with G-Cter in ATG12)" evidence="1">
    <location>
        <position position="150"/>
    </location>
</feature>